<evidence type="ECO:0000255" key="1">
    <source>
        <dbReference type="HAMAP-Rule" id="MF_00379"/>
    </source>
</evidence>
<accession>Q9PRC7</accession>
<name>MNME_UREPA</name>
<comment type="function">
    <text evidence="1">Exhibits a very high intrinsic GTPase hydrolysis rate. Involved in the addition of a carboxymethylaminomethyl (cmnm) group at the wobble position (U34) of certain tRNAs, forming tRNA-cmnm(5)s(2)U34.</text>
</comment>
<comment type="cofactor">
    <cofactor evidence="1">
        <name>K(+)</name>
        <dbReference type="ChEBI" id="CHEBI:29103"/>
    </cofactor>
    <text evidence="1">Binds 1 potassium ion per subunit.</text>
</comment>
<comment type="subunit">
    <text evidence="1">Homodimer. Heterotetramer of two MnmE and two MnmG subunits.</text>
</comment>
<comment type="subcellular location">
    <subcellularLocation>
        <location evidence="1">Cytoplasm</location>
    </subcellularLocation>
</comment>
<comment type="similarity">
    <text evidence="1">Belongs to the TRAFAC class TrmE-Era-EngA-EngB-Septin-like GTPase superfamily. TrmE GTPase family.</text>
</comment>
<reference key="1">
    <citation type="journal article" date="2000" name="Nature">
        <title>The complete sequence of the mucosal pathogen Ureaplasma urealyticum.</title>
        <authorList>
            <person name="Glass J.I."/>
            <person name="Lefkowitz E.J."/>
            <person name="Glass J.S."/>
            <person name="Heiner C.R."/>
            <person name="Chen E.Y."/>
            <person name="Cassell G.H."/>
        </authorList>
    </citation>
    <scope>NUCLEOTIDE SEQUENCE [LARGE SCALE GENOMIC DNA]</scope>
    <source>
        <strain>ATCC 700970</strain>
    </source>
</reference>
<protein>
    <recommendedName>
        <fullName evidence="1">tRNA modification GTPase MnmE</fullName>
        <ecNumber evidence="1">3.6.-.-</ecNumber>
    </recommendedName>
</protein>
<feature type="chain" id="PRO_0000188942" description="tRNA modification GTPase MnmE">
    <location>
        <begin position="1"/>
        <end position="438"/>
    </location>
</feature>
<feature type="domain" description="TrmE-type G">
    <location>
        <begin position="214"/>
        <end position="359"/>
    </location>
</feature>
<feature type="binding site" evidence="1">
    <location>
        <position position="20"/>
    </location>
    <ligand>
        <name>(6S)-5-formyl-5,6,7,8-tetrahydrofolate</name>
        <dbReference type="ChEBI" id="CHEBI:57457"/>
    </ligand>
</feature>
<feature type="binding site" evidence="1">
    <location>
        <position position="78"/>
    </location>
    <ligand>
        <name>(6S)-5-formyl-5,6,7,8-tetrahydrofolate</name>
        <dbReference type="ChEBI" id="CHEBI:57457"/>
    </ligand>
</feature>
<feature type="binding site" evidence="1">
    <location>
        <position position="117"/>
    </location>
    <ligand>
        <name>(6S)-5-formyl-5,6,7,8-tetrahydrofolate</name>
        <dbReference type="ChEBI" id="CHEBI:57457"/>
    </ligand>
</feature>
<feature type="binding site" evidence="1">
    <location>
        <begin position="224"/>
        <end position="229"/>
    </location>
    <ligand>
        <name>GTP</name>
        <dbReference type="ChEBI" id="CHEBI:37565"/>
    </ligand>
</feature>
<feature type="binding site" evidence="1">
    <location>
        <position position="224"/>
    </location>
    <ligand>
        <name>K(+)</name>
        <dbReference type="ChEBI" id="CHEBI:29103"/>
    </ligand>
</feature>
<feature type="binding site" evidence="1">
    <location>
        <position position="228"/>
    </location>
    <ligand>
        <name>Mg(2+)</name>
        <dbReference type="ChEBI" id="CHEBI:18420"/>
    </ligand>
</feature>
<feature type="binding site" evidence="1">
    <location>
        <begin position="243"/>
        <end position="249"/>
    </location>
    <ligand>
        <name>GTP</name>
        <dbReference type="ChEBI" id="CHEBI:37565"/>
    </ligand>
</feature>
<feature type="binding site" evidence="1">
    <location>
        <position position="243"/>
    </location>
    <ligand>
        <name>K(+)</name>
        <dbReference type="ChEBI" id="CHEBI:29103"/>
    </ligand>
</feature>
<feature type="binding site" evidence="1">
    <location>
        <position position="245"/>
    </location>
    <ligand>
        <name>K(+)</name>
        <dbReference type="ChEBI" id="CHEBI:29103"/>
    </ligand>
</feature>
<feature type="binding site" evidence="1">
    <location>
        <position position="248"/>
    </location>
    <ligand>
        <name>K(+)</name>
        <dbReference type="ChEBI" id="CHEBI:29103"/>
    </ligand>
</feature>
<feature type="binding site" evidence="1">
    <location>
        <position position="249"/>
    </location>
    <ligand>
        <name>Mg(2+)</name>
        <dbReference type="ChEBI" id="CHEBI:18420"/>
    </ligand>
</feature>
<feature type="binding site" evidence="1">
    <location>
        <begin position="268"/>
        <end position="271"/>
    </location>
    <ligand>
        <name>GTP</name>
        <dbReference type="ChEBI" id="CHEBI:37565"/>
    </ligand>
</feature>
<feature type="binding site" evidence="1">
    <location>
        <position position="438"/>
    </location>
    <ligand>
        <name>(6S)-5-formyl-5,6,7,8-tetrahydrofolate</name>
        <dbReference type="ChEBI" id="CHEBI:57457"/>
    </ligand>
</feature>
<organism>
    <name type="scientific">Ureaplasma parvum serovar 3 (strain ATCC 700970)</name>
    <dbReference type="NCBI Taxonomy" id="273119"/>
    <lineage>
        <taxon>Bacteria</taxon>
        <taxon>Bacillati</taxon>
        <taxon>Mycoplasmatota</taxon>
        <taxon>Mycoplasmoidales</taxon>
        <taxon>Mycoplasmoidaceae</taxon>
        <taxon>Ureaplasma</taxon>
    </lineage>
</organism>
<sequence length="438" mass="49464">MSTIVALATAPMNCAIHIIRVSGPKAFEIINKISTIKIKKETFKIWYTILKDDNQILDEVLINTFVAPKTFTGEDLVEINCHGGIVVANLIIKTLIKYGCQPAQRGEFSRRALLNKKMDLSKIEAINNLVNAKNELSVKGVIGALLGRVSQSIAEFRHELFMIIGQIEVNIDYPEYDDVEQVDAIILKQRLLSLDKKITKIIDQSKKFLPINKGIRVLIIGKPNVGKSTLLNALCNEQKAIVTDIPGTTRDVIESSINIDNITLNILDTAGIHLTNDFVENLGINKAKALIDKVDLILYLIPANEQQDLELYDLIKKQKHLLVYTKKDLVDQYDDKQIYINAKNNDIQSLIDEIKKLFYVQEFDNANIDVLQSQRQIGILENVHYLINNAILNLEKGDTLDLIVADLEFCNLRLNELLGISSEYDFLDDLFKNFCIGK</sequence>
<dbReference type="EC" id="3.6.-.-" evidence="1"/>
<dbReference type="EMBL" id="AF222894">
    <property type="protein sequence ID" value="AAF30423.1"/>
    <property type="molecule type" value="Genomic_DNA"/>
</dbReference>
<dbReference type="RefSeq" id="WP_006688774.1">
    <property type="nucleotide sequence ID" value="NC_002162.1"/>
</dbReference>
<dbReference type="SMR" id="Q9PRC7"/>
<dbReference type="STRING" id="273119.UU018"/>
<dbReference type="EnsemblBacteria" id="AAF30423">
    <property type="protein sequence ID" value="AAF30423"/>
    <property type="gene ID" value="UU018"/>
</dbReference>
<dbReference type="GeneID" id="29672324"/>
<dbReference type="KEGG" id="uur:UU018"/>
<dbReference type="eggNOG" id="COG0486">
    <property type="taxonomic scope" value="Bacteria"/>
</dbReference>
<dbReference type="HOGENOM" id="CLU_019624_4_1_14"/>
<dbReference type="OrthoDB" id="9805918at2"/>
<dbReference type="Proteomes" id="UP000000423">
    <property type="component" value="Chromosome"/>
</dbReference>
<dbReference type="GO" id="GO:0005829">
    <property type="term" value="C:cytosol"/>
    <property type="evidence" value="ECO:0007669"/>
    <property type="project" value="TreeGrafter"/>
</dbReference>
<dbReference type="GO" id="GO:0005525">
    <property type="term" value="F:GTP binding"/>
    <property type="evidence" value="ECO:0007669"/>
    <property type="project" value="UniProtKB-UniRule"/>
</dbReference>
<dbReference type="GO" id="GO:0003924">
    <property type="term" value="F:GTPase activity"/>
    <property type="evidence" value="ECO:0007669"/>
    <property type="project" value="UniProtKB-UniRule"/>
</dbReference>
<dbReference type="GO" id="GO:0046872">
    <property type="term" value="F:metal ion binding"/>
    <property type="evidence" value="ECO:0007669"/>
    <property type="project" value="UniProtKB-KW"/>
</dbReference>
<dbReference type="GO" id="GO:0030488">
    <property type="term" value="P:tRNA methylation"/>
    <property type="evidence" value="ECO:0007669"/>
    <property type="project" value="TreeGrafter"/>
</dbReference>
<dbReference type="GO" id="GO:0002098">
    <property type="term" value="P:tRNA wobble uridine modification"/>
    <property type="evidence" value="ECO:0007669"/>
    <property type="project" value="TreeGrafter"/>
</dbReference>
<dbReference type="CDD" id="cd04164">
    <property type="entry name" value="trmE"/>
    <property type="match status" value="1"/>
</dbReference>
<dbReference type="CDD" id="cd14858">
    <property type="entry name" value="TrmE_N"/>
    <property type="match status" value="1"/>
</dbReference>
<dbReference type="Gene3D" id="3.40.50.300">
    <property type="entry name" value="P-loop containing nucleotide triphosphate hydrolases"/>
    <property type="match status" value="1"/>
</dbReference>
<dbReference type="Gene3D" id="3.30.1360.120">
    <property type="entry name" value="Probable tRNA modification gtpase trme, domain 1"/>
    <property type="match status" value="1"/>
</dbReference>
<dbReference type="Gene3D" id="1.20.120.430">
    <property type="entry name" value="tRNA modification GTPase MnmE domain 2"/>
    <property type="match status" value="1"/>
</dbReference>
<dbReference type="HAMAP" id="MF_00379">
    <property type="entry name" value="GTPase_MnmE"/>
    <property type="match status" value="1"/>
</dbReference>
<dbReference type="InterPro" id="IPR031168">
    <property type="entry name" value="G_TrmE"/>
</dbReference>
<dbReference type="InterPro" id="IPR006073">
    <property type="entry name" value="GTP-bd"/>
</dbReference>
<dbReference type="InterPro" id="IPR018948">
    <property type="entry name" value="GTP-bd_TrmE_N"/>
</dbReference>
<dbReference type="InterPro" id="IPR004520">
    <property type="entry name" value="GTPase_MnmE"/>
</dbReference>
<dbReference type="InterPro" id="IPR027368">
    <property type="entry name" value="MnmE_dom2"/>
</dbReference>
<dbReference type="InterPro" id="IPR025867">
    <property type="entry name" value="MnmE_helical"/>
</dbReference>
<dbReference type="InterPro" id="IPR027417">
    <property type="entry name" value="P-loop_NTPase"/>
</dbReference>
<dbReference type="InterPro" id="IPR005225">
    <property type="entry name" value="Small_GTP-bd"/>
</dbReference>
<dbReference type="InterPro" id="IPR027266">
    <property type="entry name" value="TrmE/GcvT_dom1"/>
</dbReference>
<dbReference type="NCBIfam" id="TIGR00450">
    <property type="entry name" value="mnmE_trmE_thdF"/>
    <property type="match status" value="1"/>
</dbReference>
<dbReference type="NCBIfam" id="TIGR00231">
    <property type="entry name" value="small_GTP"/>
    <property type="match status" value="1"/>
</dbReference>
<dbReference type="PANTHER" id="PTHR42714">
    <property type="entry name" value="TRNA MODIFICATION GTPASE GTPBP3"/>
    <property type="match status" value="1"/>
</dbReference>
<dbReference type="PANTHER" id="PTHR42714:SF2">
    <property type="entry name" value="TRNA MODIFICATION GTPASE GTPBP3, MITOCHONDRIAL"/>
    <property type="match status" value="1"/>
</dbReference>
<dbReference type="Pfam" id="PF01926">
    <property type="entry name" value="MMR_HSR1"/>
    <property type="match status" value="1"/>
</dbReference>
<dbReference type="Pfam" id="PF12631">
    <property type="entry name" value="MnmE_helical"/>
    <property type="match status" value="1"/>
</dbReference>
<dbReference type="Pfam" id="PF10396">
    <property type="entry name" value="TrmE_N"/>
    <property type="match status" value="1"/>
</dbReference>
<dbReference type="SUPFAM" id="SSF52540">
    <property type="entry name" value="P-loop containing nucleoside triphosphate hydrolases"/>
    <property type="match status" value="1"/>
</dbReference>
<dbReference type="PROSITE" id="PS51709">
    <property type="entry name" value="G_TRME"/>
    <property type="match status" value="1"/>
</dbReference>
<proteinExistence type="inferred from homology"/>
<gene>
    <name evidence="1" type="primary">mnmE</name>
    <name evidence="1" type="synonym">thdF</name>
    <name evidence="1" type="synonym">trmE</name>
    <name type="ordered locus">UU018</name>
</gene>
<keyword id="KW-0963">Cytoplasm</keyword>
<keyword id="KW-0342">GTP-binding</keyword>
<keyword id="KW-0378">Hydrolase</keyword>
<keyword id="KW-0460">Magnesium</keyword>
<keyword id="KW-0479">Metal-binding</keyword>
<keyword id="KW-0547">Nucleotide-binding</keyword>
<keyword id="KW-0630">Potassium</keyword>
<keyword id="KW-1185">Reference proteome</keyword>
<keyword id="KW-0819">tRNA processing</keyword>